<evidence type="ECO:0000255" key="1">
    <source>
        <dbReference type="HAMAP-Rule" id="MF_01624"/>
    </source>
</evidence>
<proteinExistence type="inferred from homology"/>
<keyword id="KW-0059">Arsenical resistance</keyword>
<keyword id="KW-0963">Cytoplasm</keyword>
<keyword id="KW-1015">Disulfide bond</keyword>
<keyword id="KW-0560">Oxidoreductase</keyword>
<keyword id="KW-0676">Redox-active center</keyword>
<organism>
    <name type="scientific">Staphylococcus aureus (strain bovine RF122 / ET3-1)</name>
    <dbReference type="NCBI Taxonomy" id="273036"/>
    <lineage>
        <taxon>Bacteria</taxon>
        <taxon>Bacillati</taxon>
        <taxon>Bacillota</taxon>
        <taxon>Bacilli</taxon>
        <taxon>Bacillales</taxon>
        <taxon>Staphylococcaceae</taxon>
        <taxon>Staphylococcus</taxon>
    </lineage>
</organism>
<feature type="chain" id="PRO_1000069600" description="Arsenate reductase">
    <location>
        <begin position="1"/>
        <end position="131"/>
    </location>
</feature>
<feature type="active site" description="Nucleophile" evidence="1">
    <location>
        <position position="10"/>
    </location>
</feature>
<feature type="active site" description="Nucleophile" evidence="1">
    <location>
        <position position="82"/>
    </location>
</feature>
<feature type="active site" description="Nucleophile" evidence="1">
    <location>
        <position position="89"/>
    </location>
</feature>
<feature type="disulfide bond" description="Redox-active; alternate" evidence="1">
    <location>
        <begin position="10"/>
        <end position="82"/>
    </location>
</feature>
<feature type="disulfide bond" description="Redox-active; alternate" evidence="1">
    <location>
        <begin position="82"/>
        <end position="89"/>
    </location>
</feature>
<dbReference type="EC" id="1.20.4.4" evidence="1"/>
<dbReference type="EMBL" id="AJ938182">
    <property type="protein sequence ID" value="CAI81321.1"/>
    <property type="molecule type" value="Genomic_DNA"/>
</dbReference>
<dbReference type="RefSeq" id="WP_000163238.1">
    <property type="nucleotide sequence ID" value="NC_007622.1"/>
</dbReference>
<dbReference type="SMR" id="Q2YTL3"/>
<dbReference type="KEGG" id="sab:SAB1632"/>
<dbReference type="HOGENOM" id="CLU_071415_3_2_9"/>
<dbReference type="GO" id="GO:0005737">
    <property type="term" value="C:cytoplasm"/>
    <property type="evidence" value="ECO:0007669"/>
    <property type="project" value="UniProtKB-SubCell"/>
</dbReference>
<dbReference type="GO" id="GO:0030612">
    <property type="term" value="F:arsenate reductase (thioredoxin) activity"/>
    <property type="evidence" value="ECO:0007669"/>
    <property type="project" value="UniProtKB-UniRule"/>
</dbReference>
<dbReference type="GO" id="GO:0004725">
    <property type="term" value="F:protein tyrosine phosphatase activity"/>
    <property type="evidence" value="ECO:0007669"/>
    <property type="project" value="InterPro"/>
</dbReference>
<dbReference type="GO" id="GO:0046685">
    <property type="term" value="P:response to arsenic-containing substance"/>
    <property type="evidence" value="ECO:0007669"/>
    <property type="project" value="UniProtKB-KW"/>
</dbReference>
<dbReference type="CDD" id="cd16345">
    <property type="entry name" value="LMWP_ArsC"/>
    <property type="match status" value="1"/>
</dbReference>
<dbReference type="FunFam" id="3.40.50.2300:FF:000237">
    <property type="entry name" value="Arsenate reductase"/>
    <property type="match status" value="1"/>
</dbReference>
<dbReference type="Gene3D" id="3.40.50.2300">
    <property type="match status" value="1"/>
</dbReference>
<dbReference type="HAMAP" id="MF_01624">
    <property type="entry name" value="Arsenate_reduct"/>
    <property type="match status" value="1"/>
</dbReference>
<dbReference type="InterPro" id="IPR014064">
    <property type="entry name" value="Arsenate_reductase_ArsC"/>
</dbReference>
<dbReference type="InterPro" id="IPR023485">
    <property type="entry name" value="Ptyr_pPase"/>
</dbReference>
<dbReference type="InterPro" id="IPR036196">
    <property type="entry name" value="Ptyr_pPase_sf"/>
</dbReference>
<dbReference type="NCBIfam" id="TIGR02691">
    <property type="entry name" value="arsC_pI258_fam"/>
    <property type="match status" value="1"/>
</dbReference>
<dbReference type="NCBIfam" id="NF010053">
    <property type="entry name" value="PRK13530.1"/>
    <property type="match status" value="1"/>
</dbReference>
<dbReference type="PANTHER" id="PTHR43428">
    <property type="entry name" value="ARSENATE REDUCTASE"/>
    <property type="match status" value="1"/>
</dbReference>
<dbReference type="PANTHER" id="PTHR43428:SF1">
    <property type="entry name" value="ARSENATE REDUCTASE"/>
    <property type="match status" value="1"/>
</dbReference>
<dbReference type="Pfam" id="PF01451">
    <property type="entry name" value="LMWPc"/>
    <property type="match status" value="1"/>
</dbReference>
<dbReference type="SMART" id="SM00226">
    <property type="entry name" value="LMWPc"/>
    <property type="match status" value="1"/>
</dbReference>
<dbReference type="SUPFAM" id="SSF52788">
    <property type="entry name" value="Phosphotyrosine protein phosphatases I"/>
    <property type="match status" value="1"/>
</dbReference>
<sequence>MTKKTIYFICTGNSCRSQMAEGWAKQILAEDWNVYSAGIETHGVNPKAIEAMKEVGIDISNHTSDLIDNNIIKNSNLVVTLCSDADVNCPSLPANVKKEHWGFDNPAGKPWSEFQRVRDEIKIAIENFKSR</sequence>
<gene>
    <name evidence="1" type="primary">arsC</name>
    <name type="ordered locus">SAB1632</name>
</gene>
<protein>
    <recommendedName>
        <fullName evidence="1">Arsenate reductase</fullName>
        <ecNumber evidence="1">1.20.4.4</ecNumber>
    </recommendedName>
</protein>
<comment type="function">
    <text evidence="1">Catalyzes the reduction of arsenate [As(V)] to arsenite [As(III)].</text>
</comment>
<comment type="catalytic activity">
    <reaction evidence="1">
        <text>arsenate + [thioredoxin]-dithiol + H(+) = arsenite + [thioredoxin]-disulfide + H2O</text>
        <dbReference type="Rhea" id="RHEA:43848"/>
        <dbReference type="Rhea" id="RHEA-COMP:10698"/>
        <dbReference type="Rhea" id="RHEA-COMP:10700"/>
        <dbReference type="ChEBI" id="CHEBI:15377"/>
        <dbReference type="ChEBI" id="CHEBI:15378"/>
        <dbReference type="ChEBI" id="CHEBI:29242"/>
        <dbReference type="ChEBI" id="CHEBI:29950"/>
        <dbReference type="ChEBI" id="CHEBI:48597"/>
        <dbReference type="ChEBI" id="CHEBI:50058"/>
        <dbReference type="EC" id="1.20.4.4"/>
    </reaction>
</comment>
<comment type="subcellular location">
    <subcellularLocation>
        <location evidence="1">Cytoplasm</location>
    </subcellularLocation>
</comment>
<comment type="similarity">
    <text evidence="1">Belongs to the low molecular weight phosphotyrosine protein phosphatase family. Thioredoxin-coupled ArsC subfamily.</text>
</comment>
<name>ARSC_STAAB</name>
<accession>Q2YTL3</accession>
<reference key="1">
    <citation type="journal article" date="2007" name="PLoS ONE">
        <title>Molecular correlates of host specialization in Staphylococcus aureus.</title>
        <authorList>
            <person name="Herron-Olson L."/>
            <person name="Fitzgerald J.R."/>
            <person name="Musser J.M."/>
            <person name="Kapur V."/>
        </authorList>
    </citation>
    <scope>NUCLEOTIDE SEQUENCE [LARGE SCALE GENOMIC DNA]</scope>
    <source>
        <strain>bovine RF122 / ET3-1</strain>
    </source>
</reference>